<sequence>MSEGESKSTHFGYKTVEVDKKAELVAGVFHSVAAKYDIMNDVMSFGIHRFWKRYTIEVSGARPGMKVLDLAGGTGDLTAKFSHLVGDKGEVVLADINDSMLKVGRTKLRDKGIVNNVSYVQANAEALPFPDNHFDIITIAFGLRNVTDKDAALRSMNRVLKPGGKLLVLEFSKPQHEIMRKVYDLYSFKVLPKMGELITKDADSYEYLAESIRMHPDQDTLKQMMVDAGFEQVDYTNMTDGIVALHRGYKF</sequence>
<protein>
    <recommendedName>
        <fullName evidence="1">Ubiquinone/menaquinone biosynthesis C-methyltransferase UbiE</fullName>
        <ecNumber evidence="1">2.1.1.163</ecNumber>
        <ecNumber evidence="1">2.1.1.201</ecNumber>
    </recommendedName>
    <alternativeName>
        <fullName evidence="1">2-methoxy-6-polyprenyl-1,4-benzoquinol methylase</fullName>
    </alternativeName>
    <alternativeName>
        <fullName evidence="1">Demethylmenaquinone methyltransferase</fullName>
    </alternativeName>
</protein>
<comment type="function">
    <text evidence="1">Methyltransferase required for the conversion of demethylmenaquinol (DMKH2) to menaquinol (MKH2) and the conversion of 2-polyprenyl-6-methoxy-1,4-benzoquinol (DDMQH2) to 2-polyprenyl-3-methyl-6-methoxy-1,4-benzoquinol (DMQH2).</text>
</comment>
<comment type="catalytic activity">
    <reaction evidence="1">
        <text>a 2-demethylmenaquinol + S-adenosyl-L-methionine = a menaquinol + S-adenosyl-L-homocysteine + H(+)</text>
        <dbReference type="Rhea" id="RHEA:42640"/>
        <dbReference type="Rhea" id="RHEA-COMP:9539"/>
        <dbReference type="Rhea" id="RHEA-COMP:9563"/>
        <dbReference type="ChEBI" id="CHEBI:15378"/>
        <dbReference type="ChEBI" id="CHEBI:18151"/>
        <dbReference type="ChEBI" id="CHEBI:55437"/>
        <dbReference type="ChEBI" id="CHEBI:57856"/>
        <dbReference type="ChEBI" id="CHEBI:59789"/>
        <dbReference type="EC" id="2.1.1.163"/>
    </reaction>
</comment>
<comment type="catalytic activity">
    <reaction evidence="1">
        <text>a 2-methoxy-6-(all-trans-polyprenyl)benzene-1,4-diol + S-adenosyl-L-methionine = a 5-methoxy-2-methyl-3-(all-trans-polyprenyl)benzene-1,4-diol + S-adenosyl-L-homocysteine + H(+)</text>
        <dbReference type="Rhea" id="RHEA:28286"/>
        <dbReference type="Rhea" id="RHEA-COMP:10858"/>
        <dbReference type="Rhea" id="RHEA-COMP:10859"/>
        <dbReference type="ChEBI" id="CHEBI:15378"/>
        <dbReference type="ChEBI" id="CHEBI:57856"/>
        <dbReference type="ChEBI" id="CHEBI:59789"/>
        <dbReference type="ChEBI" id="CHEBI:84166"/>
        <dbReference type="ChEBI" id="CHEBI:84167"/>
        <dbReference type="EC" id="2.1.1.201"/>
    </reaction>
</comment>
<comment type="pathway">
    <text evidence="1">Quinol/quinone metabolism; menaquinone biosynthesis; menaquinol from 1,4-dihydroxy-2-naphthoate: step 2/2.</text>
</comment>
<comment type="pathway">
    <text evidence="1">Cofactor biosynthesis; ubiquinone biosynthesis.</text>
</comment>
<comment type="similarity">
    <text evidence="1">Belongs to the class I-like SAM-binding methyltransferase superfamily. MenG/UbiE family.</text>
</comment>
<feature type="chain" id="PRO_1000187811" description="Ubiquinone/menaquinone biosynthesis C-methyltransferase UbiE">
    <location>
        <begin position="1"/>
        <end position="251"/>
    </location>
</feature>
<feature type="binding site" evidence="1">
    <location>
        <position position="74"/>
    </location>
    <ligand>
        <name>S-adenosyl-L-methionine</name>
        <dbReference type="ChEBI" id="CHEBI:59789"/>
    </ligand>
</feature>
<feature type="binding site" evidence="1">
    <location>
        <position position="95"/>
    </location>
    <ligand>
        <name>S-adenosyl-L-methionine</name>
        <dbReference type="ChEBI" id="CHEBI:59789"/>
    </ligand>
</feature>
<feature type="binding site" evidence="1">
    <location>
        <begin position="123"/>
        <end position="124"/>
    </location>
    <ligand>
        <name>S-adenosyl-L-methionine</name>
        <dbReference type="ChEBI" id="CHEBI:59789"/>
    </ligand>
</feature>
<name>UBIE_SHEB2</name>
<gene>
    <name evidence="1" type="primary">ubiE</name>
    <name type="ordered locus">Sbal223_0445</name>
</gene>
<evidence type="ECO:0000255" key="1">
    <source>
        <dbReference type="HAMAP-Rule" id="MF_01813"/>
    </source>
</evidence>
<keyword id="KW-0474">Menaquinone biosynthesis</keyword>
<keyword id="KW-0489">Methyltransferase</keyword>
<keyword id="KW-0949">S-adenosyl-L-methionine</keyword>
<keyword id="KW-0808">Transferase</keyword>
<keyword id="KW-0831">Ubiquinone biosynthesis</keyword>
<organism>
    <name type="scientific">Shewanella baltica (strain OS223)</name>
    <dbReference type="NCBI Taxonomy" id="407976"/>
    <lineage>
        <taxon>Bacteria</taxon>
        <taxon>Pseudomonadati</taxon>
        <taxon>Pseudomonadota</taxon>
        <taxon>Gammaproteobacteria</taxon>
        <taxon>Alteromonadales</taxon>
        <taxon>Shewanellaceae</taxon>
        <taxon>Shewanella</taxon>
    </lineage>
</organism>
<accession>B8E6B6</accession>
<reference key="1">
    <citation type="submission" date="2008-12" db="EMBL/GenBank/DDBJ databases">
        <title>Complete sequence of chromosome of Shewanella baltica OS223.</title>
        <authorList>
            <consortium name="US DOE Joint Genome Institute"/>
            <person name="Lucas S."/>
            <person name="Copeland A."/>
            <person name="Lapidus A."/>
            <person name="Glavina del Rio T."/>
            <person name="Dalin E."/>
            <person name="Tice H."/>
            <person name="Bruce D."/>
            <person name="Goodwin L."/>
            <person name="Pitluck S."/>
            <person name="Chertkov O."/>
            <person name="Meincke L."/>
            <person name="Brettin T."/>
            <person name="Detter J.C."/>
            <person name="Han C."/>
            <person name="Kuske C.R."/>
            <person name="Larimer F."/>
            <person name="Land M."/>
            <person name="Hauser L."/>
            <person name="Kyrpides N."/>
            <person name="Ovchinnikova G."/>
            <person name="Brettar I."/>
            <person name="Rodrigues J."/>
            <person name="Konstantinidis K."/>
            <person name="Tiedje J."/>
        </authorList>
    </citation>
    <scope>NUCLEOTIDE SEQUENCE [LARGE SCALE GENOMIC DNA]</scope>
    <source>
        <strain>OS223</strain>
    </source>
</reference>
<dbReference type="EC" id="2.1.1.163" evidence="1"/>
<dbReference type="EC" id="2.1.1.201" evidence="1"/>
<dbReference type="EMBL" id="CP001252">
    <property type="protein sequence ID" value="ACK44979.1"/>
    <property type="molecule type" value="Genomic_DNA"/>
</dbReference>
<dbReference type="RefSeq" id="WP_012586616.1">
    <property type="nucleotide sequence ID" value="NC_011663.1"/>
</dbReference>
<dbReference type="SMR" id="B8E6B6"/>
<dbReference type="KEGG" id="sbp:Sbal223_0445"/>
<dbReference type="HOGENOM" id="CLU_037990_0_0_6"/>
<dbReference type="UniPathway" id="UPA00079">
    <property type="reaction ID" value="UER00169"/>
</dbReference>
<dbReference type="UniPathway" id="UPA00232"/>
<dbReference type="Proteomes" id="UP000002507">
    <property type="component" value="Chromosome"/>
</dbReference>
<dbReference type="GO" id="GO:0008425">
    <property type="term" value="F:2-methoxy-6-polyprenyl-1,4-benzoquinol methyltransferase activity"/>
    <property type="evidence" value="ECO:0007669"/>
    <property type="project" value="UniProtKB-UniRule"/>
</dbReference>
<dbReference type="GO" id="GO:0043770">
    <property type="term" value="F:demethylmenaquinone methyltransferase activity"/>
    <property type="evidence" value="ECO:0007669"/>
    <property type="project" value="UniProtKB-UniRule"/>
</dbReference>
<dbReference type="GO" id="GO:0009060">
    <property type="term" value="P:aerobic respiration"/>
    <property type="evidence" value="ECO:0007669"/>
    <property type="project" value="UniProtKB-UniRule"/>
</dbReference>
<dbReference type="GO" id="GO:0009234">
    <property type="term" value="P:menaquinone biosynthetic process"/>
    <property type="evidence" value="ECO:0007669"/>
    <property type="project" value="UniProtKB-UniRule"/>
</dbReference>
<dbReference type="GO" id="GO:0032259">
    <property type="term" value="P:methylation"/>
    <property type="evidence" value="ECO:0007669"/>
    <property type="project" value="UniProtKB-KW"/>
</dbReference>
<dbReference type="CDD" id="cd02440">
    <property type="entry name" value="AdoMet_MTases"/>
    <property type="match status" value="1"/>
</dbReference>
<dbReference type="FunFam" id="3.40.50.150:FF:000014">
    <property type="entry name" value="Ubiquinone/menaquinone biosynthesis C-methyltransferase UbiE"/>
    <property type="match status" value="1"/>
</dbReference>
<dbReference type="Gene3D" id="3.40.50.150">
    <property type="entry name" value="Vaccinia Virus protein VP39"/>
    <property type="match status" value="1"/>
</dbReference>
<dbReference type="HAMAP" id="MF_01813">
    <property type="entry name" value="MenG_UbiE_methyltr"/>
    <property type="match status" value="1"/>
</dbReference>
<dbReference type="InterPro" id="IPR029063">
    <property type="entry name" value="SAM-dependent_MTases_sf"/>
</dbReference>
<dbReference type="InterPro" id="IPR004033">
    <property type="entry name" value="UbiE/COQ5_MeTrFase"/>
</dbReference>
<dbReference type="InterPro" id="IPR023576">
    <property type="entry name" value="UbiE/COQ5_MeTrFase_CS"/>
</dbReference>
<dbReference type="NCBIfam" id="TIGR01934">
    <property type="entry name" value="MenG_MenH_UbiE"/>
    <property type="match status" value="1"/>
</dbReference>
<dbReference type="NCBIfam" id="NF001240">
    <property type="entry name" value="PRK00216.1-1"/>
    <property type="match status" value="1"/>
</dbReference>
<dbReference type="NCBIfam" id="NF001242">
    <property type="entry name" value="PRK00216.1-3"/>
    <property type="match status" value="1"/>
</dbReference>
<dbReference type="NCBIfam" id="NF001244">
    <property type="entry name" value="PRK00216.1-5"/>
    <property type="match status" value="1"/>
</dbReference>
<dbReference type="PANTHER" id="PTHR43591:SF24">
    <property type="entry name" value="2-METHOXY-6-POLYPRENYL-1,4-BENZOQUINOL METHYLASE, MITOCHONDRIAL"/>
    <property type="match status" value="1"/>
</dbReference>
<dbReference type="PANTHER" id="PTHR43591">
    <property type="entry name" value="METHYLTRANSFERASE"/>
    <property type="match status" value="1"/>
</dbReference>
<dbReference type="Pfam" id="PF01209">
    <property type="entry name" value="Ubie_methyltran"/>
    <property type="match status" value="1"/>
</dbReference>
<dbReference type="SUPFAM" id="SSF53335">
    <property type="entry name" value="S-adenosyl-L-methionine-dependent methyltransferases"/>
    <property type="match status" value="1"/>
</dbReference>
<dbReference type="PROSITE" id="PS51608">
    <property type="entry name" value="SAM_MT_UBIE"/>
    <property type="match status" value="1"/>
</dbReference>
<dbReference type="PROSITE" id="PS01183">
    <property type="entry name" value="UBIE_1"/>
    <property type="match status" value="1"/>
</dbReference>
<dbReference type="PROSITE" id="PS01184">
    <property type="entry name" value="UBIE_2"/>
    <property type="match status" value="1"/>
</dbReference>
<proteinExistence type="inferred from homology"/>